<comment type="function">
    <text evidence="1">Major role in the synthesis of nucleoside triphosphates other than ATP. The ATP gamma phosphate is transferred to the NDP beta phosphate via a ping-pong mechanism, using a phosphorylated active-site intermediate.</text>
</comment>
<comment type="catalytic activity">
    <reaction evidence="1">
        <text>a 2'-deoxyribonucleoside 5'-diphosphate + ATP = a 2'-deoxyribonucleoside 5'-triphosphate + ADP</text>
        <dbReference type="Rhea" id="RHEA:44640"/>
        <dbReference type="ChEBI" id="CHEBI:30616"/>
        <dbReference type="ChEBI" id="CHEBI:61560"/>
        <dbReference type="ChEBI" id="CHEBI:73316"/>
        <dbReference type="ChEBI" id="CHEBI:456216"/>
        <dbReference type="EC" id="2.7.4.6"/>
    </reaction>
</comment>
<comment type="catalytic activity">
    <reaction evidence="1">
        <text>a ribonucleoside 5'-diphosphate + ATP = a ribonucleoside 5'-triphosphate + ADP</text>
        <dbReference type="Rhea" id="RHEA:18113"/>
        <dbReference type="ChEBI" id="CHEBI:30616"/>
        <dbReference type="ChEBI" id="CHEBI:57930"/>
        <dbReference type="ChEBI" id="CHEBI:61557"/>
        <dbReference type="ChEBI" id="CHEBI:456216"/>
        <dbReference type="EC" id="2.7.4.6"/>
    </reaction>
</comment>
<comment type="cofactor">
    <cofactor evidence="1">
        <name>Mg(2+)</name>
        <dbReference type="ChEBI" id="CHEBI:18420"/>
    </cofactor>
</comment>
<comment type="subunit">
    <text evidence="1">Homotetramer.</text>
</comment>
<comment type="subcellular location">
    <subcellularLocation>
        <location evidence="1">Cytoplasm</location>
    </subcellularLocation>
</comment>
<comment type="similarity">
    <text evidence="1">Belongs to the NDK family.</text>
</comment>
<reference key="1">
    <citation type="journal article" date="2007" name="PLoS ONE">
        <title>Complete genomic characterization of a pathogenic A.II strain of Francisella tularensis subspecies tularensis.</title>
        <authorList>
            <person name="Beckstrom-Sternberg S.M."/>
            <person name="Auerbach R.K."/>
            <person name="Godbole S."/>
            <person name="Pearson J.V."/>
            <person name="Beckstrom-Sternberg J.S."/>
            <person name="Deng Z."/>
            <person name="Munk C."/>
            <person name="Kubota K."/>
            <person name="Zhou Y."/>
            <person name="Bruce D."/>
            <person name="Noronha J."/>
            <person name="Scheuermann R.H."/>
            <person name="Wang A."/>
            <person name="Wei X."/>
            <person name="Wang J."/>
            <person name="Hao J."/>
            <person name="Wagner D.M."/>
            <person name="Brettin T.S."/>
            <person name="Brown N."/>
            <person name="Gilna P."/>
            <person name="Keim P.S."/>
        </authorList>
    </citation>
    <scope>NUCLEOTIDE SEQUENCE [LARGE SCALE GENOMIC DNA]</scope>
    <source>
        <strain>WY96-3418</strain>
    </source>
</reference>
<evidence type="ECO:0000255" key="1">
    <source>
        <dbReference type="HAMAP-Rule" id="MF_00451"/>
    </source>
</evidence>
<name>NDK_FRATW</name>
<keyword id="KW-0067">ATP-binding</keyword>
<keyword id="KW-0963">Cytoplasm</keyword>
<keyword id="KW-0418">Kinase</keyword>
<keyword id="KW-0460">Magnesium</keyword>
<keyword id="KW-0479">Metal-binding</keyword>
<keyword id="KW-0546">Nucleotide metabolism</keyword>
<keyword id="KW-0547">Nucleotide-binding</keyword>
<keyword id="KW-0597">Phosphoprotein</keyword>
<keyword id="KW-0808">Transferase</keyword>
<organism>
    <name type="scientific">Francisella tularensis subsp. tularensis (strain WY96-3418)</name>
    <dbReference type="NCBI Taxonomy" id="418136"/>
    <lineage>
        <taxon>Bacteria</taxon>
        <taxon>Pseudomonadati</taxon>
        <taxon>Pseudomonadota</taxon>
        <taxon>Gammaproteobacteria</taxon>
        <taxon>Thiotrichales</taxon>
        <taxon>Francisellaceae</taxon>
        <taxon>Francisella</taxon>
    </lineage>
</organism>
<protein>
    <recommendedName>
        <fullName evidence="1">Nucleoside diphosphate kinase</fullName>
        <shortName evidence="1">NDK</shortName>
        <shortName evidence="1">NDP kinase</shortName>
        <ecNumber evidence="1">2.7.4.6</ecNumber>
    </recommendedName>
    <alternativeName>
        <fullName evidence="1">Nucleoside-2-P kinase</fullName>
    </alternativeName>
</protein>
<sequence length="140" mass="15527">MTKQRTLSIIKPDAVEKNVIGEIYSRFEKAGLRIIAAKMKHLSKAEAERFYAVHKDRPFFSALVEFMISGPVMIQVLEGENAIAKNRELMGATNPKEAKAGTIRADFADSIDANAVHGSDAEDTAAQEIRYFFSDTEIFG</sequence>
<proteinExistence type="inferred from homology"/>
<accession>A4IZP2</accession>
<dbReference type="EC" id="2.7.4.6" evidence="1"/>
<dbReference type="EMBL" id="CP000608">
    <property type="protein sequence ID" value="ABO47392.1"/>
    <property type="molecule type" value="Genomic_DNA"/>
</dbReference>
<dbReference type="RefSeq" id="WP_003020029.1">
    <property type="nucleotide sequence ID" value="NC_009257.1"/>
</dbReference>
<dbReference type="SMR" id="A4IZP2"/>
<dbReference type="KEGG" id="ftw:FTW_1707"/>
<dbReference type="HOGENOM" id="CLU_060216_8_1_6"/>
<dbReference type="GO" id="GO:0005737">
    <property type="term" value="C:cytoplasm"/>
    <property type="evidence" value="ECO:0007669"/>
    <property type="project" value="UniProtKB-SubCell"/>
</dbReference>
<dbReference type="GO" id="GO:0005524">
    <property type="term" value="F:ATP binding"/>
    <property type="evidence" value="ECO:0007669"/>
    <property type="project" value="UniProtKB-UniRule"/>
</dbReference>
<dbReference type="GO" id="GO:0046872">
    <property type="term" value="F:metal ion binding"/>
    <property type="evidence" value="ECO:0007669"/>
    <property type="project" value="UniProtKB-KW"/>
</dbReference>
<dbReference type="GO" id="GO:0004550">
    <property type="term" value="F:nucleoside diphosphate kinase activity"/>
    <property type="evidence" value="ECO:0007669"/>
    <property type="project" value="UniProtKB-UniRule"/>
</dbReference>
<dbReference type="GO" id="GO:0006241">
    <property type="term" value="P:CTP biosynthetic process"/>
    <property type="evidence" value="ECO:0007669"/>
    <property type="project" value="UniProtKB-UniRule"/>
</dbReference>
<dbReference type="GO" id="GO:0006183">
    <property type="term" value="P:GTP biosynthetic process"/>
    <property type="evidence" value="ECO:0007669"/>
    <property type="project" value="UniProtKB-UniRule"/>
</dbReference>
<dbReference type="GO" id="GO:0006228">
    <property type="term" value="P:UTP biosynthetic process"/>
    <property type="evidence" value="ECO:0007669"/>
    <property type="project" value="UniProtKB-UniRule"/>
</dbReference>
<dbReference type="CDD" id="cd04413">
    <property type="entry name" value="NDPk_I"/>
    <property type="match status" value="1"/>
</dbReference>
<dbReference type="FunFam" id="3.30.70.141:FF:000001">
    <property type="entry name" value="Nucleoside diphosphate kinase"/>
    <property type="match status" value="1"/>
</dbReference>
<dbReference type="Gene3D" id="3.30.70.141">
    <property type="entry name" value="Nucleoside diphosphate kinase-like domain"/>
    <property type="match status" value="1"/>
</dbReference>
<dbReference type="HAMAP" id="MF_00451">
    <property type="entry name" value="NDP_kinase"/>
    <property type="match status" value="1"/>
</dbReference>
<dbReference type="InterPro" id="IPR034907">
    <property type="entry name" value="NDK-like_dom"/>
</dbReference>
<dbReference type="InterPro" id="IPR036850">
    <property type="entry name" value="NDK-like_dom_sf"/>
</dbReference>
<dbReference type="InterPro" id="IPR001564">
    <property type="entry name" value="Nucleoside_diP_kinase"/>
</dbReference>
<dbReference type="InterPro" id="IPR023005">
    <property type="entry name" value="Nucleoside_diP_kinase_AS"/>
</dbReference>
<dbReference type="NCBIfam" id="NF001908">
    <property type="entry name" value="PRK00668.1"/>
    <property type="match status" value="1"/>
</dbReference>
<dbReference type="PANTHER" id="PTHR46161">
    <property type="entry name" value="NUCLEOSIDE DIPHOSPHATE KINASE"/>
    <property type="match status" value="1"/>
</dbReference>
<dbReference type="PANTHER" id="PTHR46161:SF3">
    <property type="entry name" value="NUCLEOSIDE DIPHOSPHATE KINASE DDB_G0292928-RELATED"/>
    <property type="match status" value="1"/>
</dbReference>
<dbReference type="Pfam" id="PF00334">
    <property type="entry name" value="NDK"/>
    <property type="match status" value="1"/>
</dbReference>
<dbReference type="PRINTS" id="PR01243">
    <property type="entry name" value="NUCDPKINASE"/>
</dbReference>
<dbReference type="SMART" id="SM00562">
    <property type="entry name" value="NDK"/>
    <property type="match status" value="1"/>
</dbReference>
<dbReference type="SUPFAM" id="SSF54919">
    <property type="entry name" value="Nucleoside diphosphate kinase, NDK"/>
    <property type="match status" value="1"/>
</dbReference>
<dbReference type="PROSITE" id="PS00469">
    <property type="entry name" value="NDPK"/>
    <property type="match status" value="1"/>
</dbReference>
<dbReference type="PROSITE" id="PS51374">
    <property type="entry name" value="NDPK_LIKE"/>
    <property type="match status" value="1"/>
</dbReference>
<gene>
    <name evidence="1" type="primary">ndk</name>
    <name type="ordered locus">FTW_1707</name>
</gene>
<feature type="chain" id="PRO_1000026237" description="Nucleoside diphosphate kinase">
    <location>
        <begin position="1"/>
        <end position="140"/>
    </location>
</feature>
<feature type="active site" description="Pros-phosphohistidine intermediate" evidence="1">
    <location>
        <position position="117"/>
    </location>
</feature>
<feature type="binding site" evidence="1">
    <location>
        <position position="11"/>
    </location>
    <ligand>
        <name>ATP</name>
        <dbReference type="ChEBI" id="CHEBI:30616"/>
    </ligand>
</feature>
<feature type="binding site" evidence="1">
    <location>
        <position position="59"/>
    </location>
    <ligand>
        <name>ATP</name>
        <dbReference type="ChEBI" id="CHEBI:30616"/>
    </ligand>
</feature>
<feature type="binding site" evidence="1">
    <location>
        <position position="87"/>
    </location>
    <ligand>
        <name>ATP</name>
        <dbReference type="ChEBI" id="CHEBI:30616"/>
    </ligand>
</feature>
<feature type="binding site" evidence="1">
    <location>
        <position position="93"/>
    </location>
    <ligand>
        <name>ATP</name>
        <dbReference type="ChEBI" id="CHEBI:30616"/>
    </ligand>
</feature>
<feature type="binding site" evidence="1">
    <location>
        <position position="104"/>
    </location>
    <ligand>
        <name>ATP</name>
        <dbReference type="ChEBI" id="CHEBI:30616"/>
    </ligand>
</feature>
<feature type="binding site" evidence="1">
    <location>
        <position position="114"/>
    </location>
    <ligand>
        <name>ATP</name>
        <dbReference type="ChEBI" id="CHEBI:30616"/>
    </ligand>
</feature>